<reference key="1">
    <citation type="journal article" date="2002" name="Am. J. Bot.">
        <title>Monophyly of the Convolvulaceae and circumscription of their major lineages based on DNA sequences of multiple chloroplast loci.</title>
        <authorList>
            <person name="Stefanovic S."/>
            <person name="Krueger L."/>
            <person name="Olmstead R.G."/>
        </authorList>
        <dbReference type="AGRICOLA" id="IND23320510"/>
    </citation>
    <scope>NUCLEOTIDE SEQUENCE [GENOMIC DNA]</scope>
</reference>
<evidence type="ECO:0000255" key="1">
    <source>
        <dbReference type="HAMAP-Rule" id="MF_01317"/>
    </source>
</evidence>
<sequence length="38" mass="4497">MTQSNPNEQNVELNRTSLYWGLLLIFVLAVLFSNYFFN</sequence>
<dbReference type="EMBL" id="AY100855">
    <property type="protein sequence ID" value="AAM55543.1"/>
    <property type="molecule type" value="Genomic_DNA"/>
</dbReference>
<dbReference type="SMR" id="Q7H8L0"/>
<dbReference type="GO" id="GO:0009535">
    <property type="term" value="C:chloroplast thylakoid membrane"/>
    <property type="evidence" value="ECO:0007669"/>
    <property type="project" value="UniProtKB-SubCell"/>
</dbReference>
<dbReference type="GO" id="GO:0009539">
    <property type="term" value="C:photosystem II reaction center"/>
    <property type="evidence" value="ECO:0007669"/>
    <property type="project" value="InterPro"/>
</dbReference>
<dbReference type="GO" id="GO:0015979">
    <property type="term" value="P:photosynthesis"/>
    <property type="evidence" value="ECO:0007669"/>
    <property type="project" value="UniProtKB-UniRule"/>
</dbReference>
<dbReference type="HAMAP" id="MF_01317">
    <property type="entry name" value="PSII_PsbL"/>
    <property type="match status" value="1"/>
</dbReference>
<dbReference type="InterPro" id="IPR003372">
    <property type="entry name" value="PSII_PsbL"/>
</dbReference>
<dbReference type="InterPro" id="IPR037266">
    <property type="entry name" value="PSII_PsbL_sf"/>
</dbReference>
<dbReference type="NCBIfam" id="NF001972">
    <property type="entry name" value="PRK00753.1"/>
    <property type="match status" value="1"/>
</dbReference>
<dbReference type="Pfam" id="PF02419">
    <property type="entry name" value="PsbL"/>
    <property type="match status" value="1"/>
</dbReference>
<dbReference type="SUPFAM" id="SSF161017">
    <property type="entry name" value="Photosystem II reaction center protein L, PsbL"/>
    <property type="match status" value="1"/>
</dbReference>
<protein>
    <recommendedName>
        <fullName evidence="1">Photosystem II reaction center protein L</fullName>
        <shortName evidence="1">PSII-L</shortName>
    </recommendedName>
</protein>
<geneLocation type="chloroplast"/>
<name>PSBL_IPOWR</name>
<comment type="function">
    <text evidence="1">One of the components of the core complex of photosystem II (PSII). PSII is a light-driven water:plastoquinone oxidoreductase that uses light energy to abstract electrons from H(2)O, generating O(2) and a proton gradient subsequently used for ATP formation. It consists of a core antenna complex that captures photons, and an electron transfer chain that converts photonic excitation into a charge separation. This subunit is found at the monomer-monomer interface and is required for correct PSII assembly and/or dimerization.</text>
</comment>
<comment type="subunit">
    <text evidence="1">PSII is composed of 1 copy each of membrane proteins PsbA, PsbB, PsbC, PsbD, PsbE, PsbF, PsbH, PsbI, PsbJ, PsbK, PsbL, PsbM, PsbT, PsbX, PsbY, PsbZ, Psb30/Ycf12, at least 3 peripheral proteins of the oxygen-evolving complex and a large number of cofactors. It forms dimeric complexes.</text>
</comment>
<comment type="subcellular location">
    <subcellularLocation>
        <location evidence="1">Plastid</location>
        <location evidence="1">Chloroplast thylakoid membrane</location>
        <topology evidence="1">Single-pass membrane protein</topology>
    </subcellularLocation>
</comment>
<comment type="similarity">
    <text evidence="1">Belongs to the PsbL family.</text>
</comment>
<gene>
    <name evidence="1" type="primary">psbL</name>
</gene>
<proteinExistence type="inferred from homology"/>
<keyword id="KW-0150">Chloroplast</keyword>
<keyword id="KW-0472">Membrane</keyword>
<keyword id="KW-0602">Photosynthesis</keyword>
<keyword id="KW-0604">Photosystem II</keyword>
<keyword id="KW-0934">Plastid</keyword>
<keyword id="KW-0674">Reaction center</keyword>
<keyword id="KW-0793">Thylakoid</keyword>
<keyword id="KW-0812">Transmembrane</keyword>
<keyword id="KW-1133">Transmembrane helix</keyword>
<organism>
    <name type="scientific">Ipomoea wrightii</name>
    <name type="common">Wright's morning glory</name>
    <dbReference type="NCBI Taxonomy" id="89666"/>
    <lineage>
        <taxon>Eukaryota</taxon>
        <taxon>Viridiplantae</taxon>
        <taxon>Streptophyta</taxon>
        <taxon>Embryophyta</taxon>
        <taxon>Tracheophyta</taxon>
        <taxon>Spermatophyta</taxon>
        <taxon>Magnoliopsida</taxon>
        <taxon>eudicotyledons</taxon>
        <taxon>Gunneridae</taxon>
        <taxon>Pentapetalae</taxon>
        <taxon>asterids</taxon>
        <taxon>lamiids</taxon>
        <taxon>Solanales</taxon>
        <taxon>Convolvulaceae</taxon>
        <taxon>Ipomoeeae</taxon>
        <taxon>Ipomoea</taxon>
    </lineage>
</organism>
<feature type="chain" id="PRO_0000219732" description="Photosystem II reaction center protein L">
    <location>
        <begin position="1"/>
        <end position="38"/>
    </location>
</feature>
<feature type="transmembrane region" description="Helical" evidence="1">
    <location>
        <begin position="17"/>
        <end position="37"/>
    </location>
</feature>
<accession>Q7H8L0</accession>